<gene>
    <name evidence="1" type="primary">ilvC</name>
    <name type="ordered locus">SAV2056</name>
</gene>
<accession>P65151</accession>
<accession>Q99SJ6</accession>
<dbReference type="EC" id="1.1.1.86" evidence="1"/>
<dbReference type="EMBL" id="BA000017">
    <property type="protein sequence ID" value="BAB58218.1"/>
    <property type="molecule type" value="Genomic_DNA"/>
</dbReference>
<dbReference type="RefSeq" id="WP_000214552.1">
    <property type="nucleotide sequence ID" value="NC_002758.2"/>
</dbReference>
<dbReference type="SMR" id="P65151"/>
<dbReference type="KEGG" id="sav:SAV2056"/>
<dbReference type="HOGENOM" id="CLU_033821_0_1_9"/>
<dbReference type="PhylomeDB" id="P65151"/>
<dbReference type="UniPathway" id="UPA00047">
    <property type="reaction ID" value="UER00056"/>
</dbReference>
<dbReference type="UniPathway" id="UPA00049">
    <property type="reaction ID" value="UER00060"/>
</dbReference>
<dbReference type="Proteomes" id="UP000002481">
    <property type="component" value="Chromosome"/>
</dbReference>
<dbReference type="GO" id="GO:0005829">
    <property type="term" value="C:cytosol"/>
    <property type="evidence" value="ECO:0007669"/>
    <property type="project" value="TreeGrafter"/>
</dbReference>
<dbReference type="GO" id="GO:0004455">
    <property type="term" value="F:ketol-acid reductoisomerase activity"/>
    <property type="evidence" value="ECO:0007669"/>
    <property type="project" value="UniProtKB-UniRule"/>
</dbReference>
<dbReference type="GO" id="GO:0000287">
    <property type="term" value="F:magnesium ion binding"/>
    <property type="evidence" value="ECO:0007669"/>
    <property type="project" value="UniProtKB-UniRule"/>
</dbReference>
<dbReference type="GO" id="GO:0050661">
    <property type="term" value="F:NADP binding"/>
    <property type="evidence" value="ECO:0007669"/>
    <property type="project" value="InterPro"/>
</dbReference>
<dbReference type="GO" id="GO:0009097">
    <property type="term" value="P:isoleucine biosynthetic process"/>
    <property type="evidence" value="ECO:0007669"/>
    <property type="project" value="UniProtKB-UniRule"/>
</dbReference>
<dbReference type="GO" id="GO:0009099">
    <property type="term" value="P:L-valine biosynthetic process"/>
    <property type="evidence" value="ECO:0007669"/>
    <property type="project" value="UniProtKB-UniRule"/>
</dbReference>
<dbReference type="FunFam" id="3.40.50.720:FF:000023">
    <property type="entry name" value="Ketol-acid reductoisomerase (NADP(+))"/>
    <property type="match status" value="1"/>
</dbReference>
<dbReference type="Gene3D" id="6.10.240.10">
    <property type="match status" value="1"/>
</dbReference>
<dbReference type="Gene3D" id="3.40.50.720">
    <property type="entry name" value="NAD(P)-binding Rossmann-like Domain"/>
    <property type="match status" value="1"/>
</dbReference>
<dbReference type="HAMAP" id="MF_00435">
    <property type="entry name" value="IlvC"/>
    <property type="match status" value="1"/>
</dbReference>
<dbReference type="InterPro" id="IPR008927">
    <property type="entry name" value="6-PGluconate_DH-like_C_sf"/>
</dbReference>
<dbReference type="InterPro" id="IPR013023">
    <property type="entry name" value="KARI"/>
</dbReference>
<dbReference type="InterPro" id="IPR000506">
    <property type="entry name" value="KARI_C"/>
</dbReference>
<dbReference type="InterPro" id="IPR013116">
    <property type="entry name" value="KARI_N"/>
</dbReference>
<dbReference type="InterPro" id="IPR014359">
    <property type="entry name" value="KARI_prok"/>
</dbReference>
<dbReference type="InterPro" id="IPR036291">
    <property type="entry name" value="NAD(P)-bd_dom_sf"/>
</dbReference>
<dbReference type="NCBIfam" id="TIGR00465">
    <property type="entry name" value="ilvC"/>
    <property type="match status" value="1"/>
</dbReference>
<dbReference type="NCBIfam" id="NF004017">
    <property type="entry name" value="PRK05479.1"/>
    <property type="match status" value="1"/>
</dbReference>
<dbReference type="NCBIfam" id="NF009940">
    <property type="entry name" value="PRK13403.1"/>
    <property type="match status" value="1"/>
</dbReference>
<dbReference type="PANTHER" id="PTHR21371">
    <property type="entry name" value="KETOL-ACID REDUCTOISOMERASE, MITOCHONDRIAL"/>
    <property type="match status" value="1"/>
</dbReference>
<dbReference type="PANTHER" id="PTHR21371:SF1">
    <property type="entry name" value="KETOL-ACID REDUCTOISOMERASE, MITOCHONDRIAL"/>
    <property type="match status" value="1"/>
</dbReference>
<dbReference type="Pfam" id="PF01450">
    <property type="entry name" value="KARI_C"/>
    <property type="match status" value="1"/>
</dbReference>
<dbReference type="Pfam" id="PF07991">
    <property type="entry name" value="KARI_N"/>
    <property type="match status" value="1"/>
</dbReference>
<dbReference type="PIRSF" id="PIRSF000116">
    <property type="entry name" value="IlvC_gammaproteo"/>
    <property type="match status" value="1"/>
</dbReference>
<dbReference type="SUPFAM" id="SSF48179">
    <property type="entry name" value="6-phosphogluconate dehydrogenase C-terminal domain-like"/>
    <property type="match status" value="1"/>
</dbReference>
<dbReference type="SUPFAM" id="SSF51735">
    <property type="entry name" value="NAD(P)-binding Rossmann-fold domains"/>
    <property type="match status" value="1"/>
</dbReference>
<dbReference type="PROSITE" id="PS51851">
    <property type="entry name" value="KARI_C"/>
    <property type="match status" value="1"/>
</dbReference>
<dbReference type="PROSITE" id="PS51850">
    <property type="entry name" value="KARI_N"/>
    <property type="match status" value="1"/>
</dbReference>
<name>ILVC_STAAM</name>
<evidence type="ECO:0000255" key="1">
    <source>
        <dbReference type="HAMAP-Rule" id="MF_00435"/>
    </source>
</evidence>
<evidence type="ECO:0000255" key="2">
    <source>
        <dbReference type="PROSITE-ProRule" id="PRU01197"/>
    </source>
</evidence>
<evidence type="ECO:0000255" key="3">
    <source>
        <dbReference type="PROSITE-ProRule" id="PRU01198"/>
    </source>
</evidence>
<protein>
    <recommendedName>
        <fullName evidence="1">Ketol-acid reductoisomerase (NADP(+))</fullName>
        <shortName evidence="1">KARI</shortName>
        <ecNumber evidence="1">1.1.1.86</ecNumber>
    </recommendedName>
    <alternativeName>
        <fullName evidence="1">Acetohydroxy-acid isomeroreductase</fullName>
        <shortName evidence="1">AHIR</shortName>
    </alternativeName>
    <alternativeName>
        <fullName evidence="1">Alpha-keto-beta-hydroxylacyl reductoisomerase</fullName>
    </alternativeName>
    <alternativeName>
        <fullName evidence="1">Ketol-acid reductoisomerase type 1</fullName>
    </alternativeName>
    <alternativeName>
        <fullName evidence="1">Ketol-acid reductoisomerase type I</fullName>
    </alternativeName>
</protein>
<comment type="function">
    <text evidence="1">Involved in the biosynthesis of branched-chain amino acids (BCAA). Catalyzes an alkyl-migration followed by a ketol-acid reduction of (S)-2-acetolactate (S2AL) to yield (R)-2,3-dihydroxy-isovalerate. In the isomerase reaction, S2AL is rearranged via a Mg-dependent methyl migration to produce 3-hydroxy-3-methyl-2-ketobutyrate (HMKB). In the reductase reaction, this 2-ketoacid undergoes a metal-dependent reduction by NADPH to yield (R)-2,3-dihydroxy-isovalerate.</text>
</comment>
<comment type="catalytic activity">
    <reaction evidence="1">
        <text>(2R)-2,3-dihydroxy-3-methylbutanoate + NADP(+) = (2S)-2-acetolactate + NADPH + H(+)</text>
        <dbReference type="Rhea" id="RHEA:22068"/>
        <dbReference type="ChEBI" id="CHEBI:15378"/>
        <dbReference type="ChEBI" id="CHEBI:49072"/>
        <dbReference type="ChEBI" id="CHEBI:57783"/>
        <dbReference type="ChEBI" id="CHEBI:58349"/>
        <dbReference type="ChEBI" id="CHEBI:58476"/>
        <dbReference type="EC" id="1.1.1.86"/>
    </reaction>
</comment>
<comment type="catalytic activity">
    <reaction evidence="1">
        <text>(2R,3R)-2,3-dihydroxy-3-methylpentanoate + NADP(+) = (S)-2-ethyl-2-hydroxy-3-oxobutanoate + NADPH + H(+)</text>
        <dbReference type="Rhea" id="RHEA:13493"/>
        <dbReference type="ChEBI" id="CHEBI:15378"/>
        <dbReference type="ChEBI" id="CHEBI:49256"/>
        <dbReference type="ChEBI" id="CHEBI:49258"/>
        <dbReference type="ChEBI" id="CHEBI:57783"/>
        <dbReference type="ChEBI" id="CHEBI:58349"/>
        <dbReference type="EC" id="1.1.1.86"/>
    </reaction>
</comment>
<comment type="cofactor">
    <cofactor evidence="1">
        <name>Mg(2+)</name>
        <dbReference type="ChEBI" id="CHEBI:18420"/>
    </cofactor>
    <text evidence="1">Binds 2 magnesium ions per subunit.</text>
</comment>
<comment type="pathway">
    <text evidence="1">Amino-acid biosynthesis; L-isoleucine biosynthesis; L-isoleucine from 2-oxobutanoate: step 2/4.</text>
</comment>
<comment type="pathway">
    <text evidence="1">Amino-acid biosynthesis; L-valine biosynthesis; L-valine from pyruvate: step 2/4.</text>
</comment>
<comment type="similarity">
    <text evidence="1">Belongs to the ketol-acid reductoisomerase family.</text>
</comment>
<keyword id="KW-0028">Amino-acid biosynthesis</keyword>
<keyword id="KW-0100">Branched-chain amino acid biosynthesis</keyword>
<keyword id="KW-0460">Magnesium</keyword>
<keyword id="KW-0479">Metal-binding</keyword>
<keyword id="KW-0521">NADP</keyword>
<keyword id="KW-0560">Oxidoreductase</keyword>
<reference key="1">
    <citation type="journal article" date="2001" name="Lancet">
        <title>Whole genome sequencing of meticillin-resistant Staphylococcus aureus.</title>
        <authorList>
            <person name="Kuroda M."/>
            <person name="Ohta T."/>
            <person name="Uchiyama I."/>
            <person name="Baba T."/>
            <person name="Yuzawa H."/>
            <person name="Kobayashi I."/>
            <person name="Cui L."/>
            <person name="Oguchi A."/>
            <person name="Aoki K."/>
            <person name="Nagai Y."/>
            <person name="Lian J.-Q."/>
            <person name="Ito T."/>
            <person name="Kanamori M."/>
            <person name="Matsumaru H."/>
            <person name="Maruyama A."/>
            <person name="Murakami H."/>
            <person name="Hosoyama A."/>
            <person name="Mizutani-Ui Y."/>
            <person name="Takahashi N.K."/>
            <person name="Sawano T."/>
            <person name="Inoue R."/>
            <person name="Kaito C."/>
            <person name="Sekimizu K."/>
            <person name="Hirakawa H."/>
            <person name="Kuhara S."/>
            <person name="Goto S."/>
            <person name="Yabuzaki J."/>
            <person name="Kanehisa M."/>
            <person name="Yamashita A."/>
            <person name="Oshima K."/>
            <person name="Furuya K."/>
            <person name="Yoshino C."/>
            <person name="Shiba T."/>
            <person name="Hattori M."/>
            <person name="Ogasawara N."/>
            <person name="Hayashi H."/>
            <person name="Hiramatsu K."/>
        </authorList>
    </citation>
    <scope>NUCLEOTIDE SEQUENCE [LARGE SCALE GENOMIC DNA]</scope>
    <source>
        <strain>Mu50 / ATCC 700699</strain>
    </source>
</reference>
<sequence>MTTVYYDQDVKTDALQGKKIAVVGYGSQGHAHAQNLKDNGYDVVIGIRPGRSFDKAKEDGFDVFPVAEAVKQADVIMVLLPDEIQGDVYKNEIEPNLEKHNALAFAHGFNIHFGVIQPPADVDVFLVAPKGPGHLVRRTFVEGSAVPSLFGIQQDASGQARNIALSYAKGIGATRAGVIETTFKEETETDLFGEQAVLCGGVSKLIQSGFETLVEAGYQPELAYFEVLHEMKLIVDLMYEGGMENVRYSISNTAEFGDYVSGPRVITPDVKENMKAVLTDIQNGNFSNRFIEDNKNGFKEFYKLREEQHGHQIEKVGRELREMMPFIKSKSIEK</sequence>
<organism>
    <name type="scientific">Staphylococcus aureus (strain Mu50 / ATCC 700699)</name>
    <dbReference type="NCBI Taxonomy" id="158878"/>
    <lineage>
        <taxon>Bacteria</taxon>
        <taxon>Bacillati</taxon>
        <taxon>Bacillota</taxon>
        <taxon>Bacilli</taxon>
        <taxon>Bacillales</taxon>
        <taxon>Staphylococcaceae</taxon>
        <taxon>Staphylococcus</taxon>
    </lineage>
</organism>
<proteinExistence type="inferred from homology"/>
<feature type="chain" id="PRO_0000151356" description="Ketol-acid reductoisomerase (NADP(+))">
    <location>
        <begin position="1"/>
        <end position="334"/>
    </location>
</feature>
<feature type="domain" description="KARI N-terminal Rossmann" evidence="2">
    <location>
        <begin position="1"/>
        <end position="181"/>
    </location>
</feature>
<feature type="domain" description="KARI C-terminal knotted" evidence="3">
    <location>
        <begin position="182"/>
        <end position="327"/>
    </location>
</feature>
<feature type="active site" evidence="1">
    <location>
        <position position="107"/>
    </location>
</feature>
<feature type="binding site" evidence="1">
    <location>
        <begin position="25"/>
        <end position="28"/>
    </location>
    <ligand>
        <name>NADP(+)</name>
        <dbReference type="ChEBI" id="CHEBI:58349"/>
    </ligand>
</feature>
<feature type="binding site" evidence="1">
    <location>
        <position position="48"/>
    </location>
    <ligand>
        <name>NADP(+)</name>
        <dbReference type="ChEBI" id="CHEBI:58349"/>
    </ligand>
</feature>
<feature type="binding site" evidence="1">
    <location>
        <position position="52"/>
    </location>
    <ligand>
        <name>NADP(+)</name>
        <dbReference type="ChEBI" id="CHEBI:58349"/>
    </ligand>
</feature>
<feature type="binding site" evidence="1">
    <location>
        <begin position="82"/>
        <end position="85"/>
    </location>
    <ligand>
        <name>NADP(+)</name>
        <dbReference type="ChEBI" id="CHEBI:58349"/>
    </ligand>
</feature>
<feature type="binding site" evidence="1">
    <location>
        <position position="133"/>
    </location>
    <ligand>
        <name>NADP(+)</name>
        <dbReference type="ChEBI" id="CHEBI:58349"/>
    </ligand>
</feature>
<feature type="binding site" evidence="1">
    <location>
        <position position="190"/>
    </location>
    <ligand>
        <name>Mg(2+)</name>
        <dbReference type="ChEBI" id="CHEBI:18420"/>
        <label>1</label>
    </ligand>
</feature>
<feature type="binding site" evidence="1">
    <location>
        <position position="190"/>
    </location>
    <ligand>
        <name>Mg(2+)</name>
        <dbReference type="ChEBI" id="CHEBI:18420"/>
        <label>2</label>
    </ligand>
</feature>
<feature type="binding site" evidence="1">
    <location>
        <position position="194"/>
    </location>
    <ligand>
        <name>Mg(2+)</name>
        <dbReference type="ChEBI" id="CHEBI:18420"/>
        <label>1</label>
    </ligand>
</feature>
<feature type="binding site" evidence="1">
    <location>
        <position position="226"/>
    </location>
    <ligand>
        <name>Mg(2+)</name>
        <dbReference type="ChEBI" id="CHEBI:18420"/>
        <label>2</label>
    </ligand>
</feature>
<feature type="binding site" evidence="1">
    <location>
        <position position="230"/>
    </location>
    <ligand>
        <name>Mg(2+)</name>
        <dbReference type="ChEBI" id="CHEBI:18420"/>
        <label>2</label>
    </ligand>
</feature>
<feature type="binding site" evidence="1">
    <location>
        <position position="251"/>
    </location>
    <ligand>
        <name>substrate</name>
    </ligand>
</feature>